<name>CINAL_TRIV2</name>
<protein>
    <recommendedName>
        <fullName evidence="1">CinA-like protein</fullName>
    </recommendedName>
</protein>
<evidence type="ECO:0000255" key="1">
    <source>
        <dbReference type="HAMAP-Rule" id="MF_00226"/>
    </source>
</evidence>
<sequence length="416" mass="44685">MSAEIICVGTELLLGDILNGNAQYLAQQLAQLGIPHYHQTVVGDNPDRIKQVIEIAISRANILIFTGGLGPTPDDLTCETIADFFGSPLVESPEIIEDITQKFAQRGRVMTPSNRKQALIPQGADILPNPTGTAPGIIWEPRPDMTIFTFPGVPSEMHRMWQETAVPFLKNQGWGQEIIYSRSLKFWGIGESALAEKVTAYLNLPNPTVAPYAGKGEVRLRVSAKAPSEVAAEALIAPVEKQIKDIAGLDFYGVNHDSLASVVGELLRSSGETLSVAESCTGGLLGQMLTEISGSSDYFWGGVISYDNSVKAGLLGVNPEDLDKLGAVSDTVAEQMAIGVKTRLSTTWALSITGIAGPNGGTETKPVGLVYIGLAGPGDEVTSFKYNFGTMRDRSFIRHLSACTALDLLRRRLLTR</sequence>
<comment type="similarity">
    <text evidence="1">Belongs to the CinA family.</text>
</comment>
<reference key="1">
    <citation type="journal article" date="2014" name="Stand. Genomic Sci.">
        <title>Complete genome sequence of Anabaena variabilis ATCC 29413.</title>
        <authorList>
            <person name="Thiel T."/>
            <person name="Pratte B.S."/>
            <person name="Zhong J."/>
            <person name="Goodwin L."/>
            <person name="Copeland A."/>
            <person name="Lucas S."/>
            <person name="Han C."/>
            <person name="Pitluck S."/>
            <person name="Land M.L."/>
            <person name="Kyrpides N.C."/>
            <person name="Woyke T."/>
        </authorList>
    </citation>
    <scope>NUCLEOTIDE SEQUENCE [LARGE SCALE GENOMIC DNA]</scope>
    <source>
        <strain>ATCC 29413 / PCC 7937</strain>
    </source>
</reference>
<dbReference type="EMBL" id="CP000117">
    <property type="protein sequence ID" value="ABA21700.1"/>
    <property type="molecule type" value="Genomic_DNA"/>
</dbReference>
<dbReference type="SMR" id="Q3MBD6"/>
<dbReference type="STRING" id="240292.Ava_2078"/>
<dbReference type="KEGG" id="ava:Ava_2078"/>
<dbReference type="eggNOG" id="COG1058">
    <property type="taxonomic scope" value="Bacteria"/>
</dbReference>
<dbReference type="eggNOG" id="COG1546">
    <property type="taxonomic scope" value="Bacteria"/>
</dbReference>
<dbReference type="HOGENOM" id="CLU_030805_9_3_3"/>
<dbReference type="Proteomes" id="UP000002533">
    <property type="component" value="Chromosome"/>
</dbReference>
<dbReference type="CDD" id="cd00885">
    <property type="entry name" value="cinA"/>
    <property type="match status" value="1"/>
</dbReference>
<dbReference type="Gene3D" id="3.30.70.2860">
    <property type="match status" value="1"/>
</dbReference>
<dbReference type="Gene3D" id="3.90.950.20">
    <property type="entry name" value="CinA-like"/>
    <property type="match status" value="1"/>
</dbReference>
<dbReference type="Gene3D" id="3.40.980.10">
    <property type="entry name" value="MoaB/Mog-like domain"/>
    <property type="match status" value="1"/>
</dbReference>
<dbReference type="HAMAP" id="MF_00226_B">
    <property type="entry name" value="CinA_B"/>
    <property type="match status" value="1"/>
</dbReference>
<dbReference type="InterPro" id="IPR050101">
    <property type="entry name" value="CinA"/>
</dbReference>
<dbReference type="InterPro" id="IPR036653">
    <property type="entry name" value="CinA-like_C"/>
</dbReference>
<dbReference type="InterPro" id="IPR008136">
    <property type="entry name" value="CinA_C"/>
</dbReference>
<dbReference type="InterPro" id="IPR041424">
    <property type="entry name" value="CinA_KH"/>
</dbReference>
<dbReference type="InterPro" id="IPR008135">
    <property type="entry name" value="Competence-induced_CinA"/>
</dbReference>
<dbReference type="InterPro" id="IPR036425">
    <property type="entry name" value="MoaB/Mog-like_dom_sf"/>
</dbReference>
<dbReference type="InterPro" id="IPR001453">
    <property type="entry name" value="MoaB/Mog_dom"/>
</dbReference>
<dbReference type="NCBIfam" id="TIGR00200">
    <property type="entry name" value="cinA_nterm"/>
    <property type="match status" value="1"/>
</dbReference>
<dbReference type="NCBIfam" id="TIGR00177">
    <property type="entry name" value="molyb_syn"/>
    <property type="match status" value="1"/>
</dbReference>
<dbReference type="NCBIfam" id="TIGR00199">
    <property type="entry name" value="PncC_domain"/>
    <property type="match status" value="1"/>
</dbReference>
<dbReference type="NCBIfam" id="NF001813">
    <property type="entry name" value="PRK00549.1"/>
    <property type="match status" value="1"/>
</dbReference>
<dbReference type="PANTHER" id="PTHR13939">
    <property type="entry name" value="NICOTINAMIDE-NUCLEOTIDE AMIDOHYDROLASE PNCC"/>
    <property type="match status" value="1"/>
</dbReference>
<dbReference type="PANTHER" id="PTHR13939:SF0">
    <property type="entry name" value="NMN AMIDOHYDROLASE-LIKE PROTEIN YFAY"/>
    <property type="match status" value="1"/>
</dbReference>
<dbReference type="Pfam" id="PF02464">
    <property type="entry name" value="CinA"/>
    <property type="match status" value="1"/>
</dbReference>
<dbReference type="Pfam" id="PF18146">
    <property type="entry name" value="CinA_KH"/>
    <property type="match status" value="1"/>
</dbReference>
<dbReference type="Pfam" id="PF00994">
    <property type="entry name" value="MoCF_biosynth"/>
    <property type="match status" value="1"/>
</dbReference>
<dbReference type="PIRSF" id="PIRSF006728">
    <property type="entry name" value="CinA"/>
    <property type="match status" value="1"/>
</dbReference>
<dbReference type="SMART" id="SM00852">
    <property type="entry name" value="MoCF_biosynth"/>
    <property type="match status" value="1"/>
</dbReference>
<dbReference type="SUPFAM" id="SSF142433">
    <property type="entry name" value="CinA-like"/>
    <property type="match status" value="1"/>
</dbReference>
<dbReference type="SUPFAM" id="SSF53218">
    <property type="entry name" value="Molybdenum cofactor biosynthesis proteins"/>
    <property type="match status" value="1"/>
</dbReference>
<accession>Q3MBD6</accession>
<gene>
    <name type="ordered locus">Ava_2078</name>
</gene>
<feature type="chain" id="PRO_1000058691" description="CinA-like protein">
    <location>
        <begin position="1"/>
        <end position="416"/>
    </location>
</feature>
<proteinExistence type="inferred from homology"/>
<organism>
    <name type="scientific">Trichormus variabilis (strain ATCC 29413 / PCC 7937)</name>
    <name type="common">Anabaena variabilis</name>
    <dbReference type="NCBI Taxonomy" id="240292"/>
    <lineage>
        <taxon>Bacteria</taxon>
        <taxon>Bacillati</taxon>
        <taxon>Cyanobacteriota</taxon>
        <taxon>Cyanophyceae</taxon>
        <taxon>Nostocales</taxon>
        <taxon>Nostocaceae</taxon>
        <taxon>Trichormus</taxon>
    </lineage>
</organism>